<evidence type="ECO:0000255" key="1">
    <source>
        <dbReference type="HAMAP-Rule" id="MF_00195"/>
    </source>
</evidence>
<organism>
    <name type="scientific">Thermomicrobium roseum (strain ATCC 27502 / DSM 5159 / P-2)</name>
    <dbReference type="NCBI Taxonomy" id="309801"/>
    <lineage>
        <taxon>Bacteria</taxon>
        <taxon>Pseudomonadati</taxon>
        <taxon>Thermomicrobiota</taxon>
        <taxon>Thermomicrobia</taxon>
        <taxon>Thermomicrobiales</taxon>
        <taxon>Thermomicrobiaceae</taxon>
        <taxon>Thermomicrobium</taxon>
    </lineage>
</organism>
<feature type="chain" id="PRO_1000124379" description="GTPase Der">
    <location>
        <begin position="1"/>
        <end position="460"/>
    </location>
</feature>
<feature type="domain" description="EngA-type G 1">
    <location>
        <begin position="4"/>
        <end position="174"/>
    </location>
</feature>
<feature type="domain" description="EngA-type G 2">
    <location>
        <begin position="184"/>
        <end position="361"/>
    </location>
</feature>
<feature type="domain" description="KH-like" evidence="1">
    <location>
        <begin position="362"/>
        <end position="446"/>
    </location>
</feature>
<feature type="binding site" evidence="1">
    <location>
        <begin position="10"/>
        <end position="17"/>
    </location>
    <ligand>
        <name>GTP</name>
        <dbReference type="ChEBI" id="CHEBI:37565"/>
        <label>1</label>
    </ligand>
</feature>
<feature type="binding site" evidence="1">
    <location>
        <begin position="57"/>
        <end position="61"/>
    </location>
    <ligand>
        <name>GTP</name>
        <dbReference type="ChEBI" id="CHEBI:37565"/>
        <label>1</label>
    </ligand>
</feature>
<feature type="binding site" evidence="1">
    <location>
        <begin position="126"/>
        <end position="129"/>
    </location>
    <ligand>
        <name>GTP</name>
        <dbReference type="ChEBI" id="CHEBI:37565"/>
        <label>1</label>
    </ligand>
</feature>
<feature type="binding site" evidence="1">
    <location>
        <begin position="190"/>
        <end position="197"/>
    </location>
    <ligand>
        <name>GTP</name>
        <dbReference type="ChEBI" id="CHEBI:37565"/>
        <label>2</label>
    </ligand>
</feature>
<feature type="binding site" evidence="1">
    <location>
        <begin position="237"/>
        <end position="241"/>
    </location>
    <ligand>
        <name>GTP</name>
        <dbReference type="ChEBI" id="CHEBI:37565"/>
        <label>2</label>
    </ligand>
</feature>
<feature type="binding site" evidence="1">
    <location>
        <begin position="302"/>
        <end position="305"/>
    </location>
    <ligand>
        <name>GTP</name>
        <dbReference type="ChEBI" id="CHEBI:37565"/>
        <label>2</label>
    </ligand>
</feature>
<accession>B9KZ43</accession>
<reference key="1">
    <citation type="journal article" date="2009" name="PLoS ONE">
        <title>Complete genome sequence of the aerobic CO-oxidizing thermophile Thermomicrobium roseum.</title>
        <authorList>
            <person name="Wu D."/>
            <person name="Raymond J."/>
            <person name="Wu M."/>
            <person name="Chatterji S."/>
            <person name="Ren Q."/>
            <person name="Graham J.E."/>
            <person name="Bryant D.A."/>
            <person name="Robb F."/>
            <person name="Colman A."/>
            <person name="Tallon L.J."/>
            <person name="Badger J.H."/>
            <person name="Madupu R."/>
            <person name="Ward N.L."/>
            <person name="Eisen J.A."/>
        </authorList>
    </citation>
    <scope>NUCLEOTIDE SEQUENCE [LARGE SCALE GENOMIC DNA]</scope>
    <source>
        <strain>ATCC 27502 / DSM 5159 / P-2</strain>
    </source>
</reference>
<proteinExistence type="inferred from homology"/>
<gene>
    <name evidence="1" type="primary">der</name>
    <name type="synonym">engA</name>
    <name type="ordered locus">trd_0754</name>
</gene>
<keyword id="KW-0342">GTP-binding</keyword>
<keyword id="KW-0547">Nucleotide-binding</keyword>
<keyword id="KW-1185">Reference proteome</keyword>
<keyword id="KW-0677">Repeat</keyword>
<keyword id="KW-0690">Ribosome biogenesis</keyword>
<name>DER_THERP</name>
<protein>
    <recommendedName>
        <fullName evidence="1">GTPase Der</fullName>
    </recommendedName>
    <alternativeName>
        <fullName evidence="1">GTP-binding protein EngA</fullName>
    </alternativeName>
</protein>
<comment type="function">
    <text evidence="1">GTPase that plays an essential role in the late steps of ribosome biogenesis.</text>
</comment>
<comment type="subunit">
    <text evidence="1">Associates with the 50S ribosomal subunit.</text>
</comment>
<comment type="similarity">
    <text evidence="1">Belongs to the TRAFAC class TrmE-Era-EngA-EngB-Septin-like GTPase superfamily. EngA (Der) GTPase family.</text>
</comment>
<sequence>MPLPQVAIVGRPNVGKSTLFNRLLRQRRAIVEEVPGTTRDRIYGIVEWNDLRFGLFDTGGLLTEEEIERSSERELVEATKAQAELAIAEADLVIFVVDASAGPTAGDWEVADFLRRTDKPILLVANKAESREREFNALQFYELGLGDPIPVSALHGRGIADLLDAIAERLPRREEDGTAEAEAPKIAIVGRPNVGKSALLNAILGQPRQIVSPIPGTTRDAVDTELVWKGQPIVLIDTAGIRRPGRIERGIERYSILRAERAIERSDVAILVVDATEPFTHQDQAVAGKVLDAKKGIVVAINKWDLFEHMEGEGAREAFEEDAREAFHFMPWAPLVFVSALTGKNVEHVVDLALVVVAERSRRIPTAELNQLLREAIAHHPPPTRPGKWVKFYYVTQPEVNPPTFVFFCNRPQLVHFSYKRYLENRIRERYGFLGTPIELVFRERERSAPAWERGKAGRS</sequence>
<dbReference type="EMBL" id="CP001275">
    <property type="protein sequence ID" value="ACM04986.1"/>
    <property type="molecule type" value="Genomic_DNA"/>
</dbReference>
<dbReference type="RefSeq" id="WP_012642142.1">
    <property type="nucleotide sequence ID" value="NC_011959.1"/>
</dbReference>
<dbReference type="SMR" id="B9KZ43"/>
<dbReference type="STRING" id="309801.trd_0754"/>
<dbReference type="KEGG" id="tro:trd_0754"/>
<dbReference type="eggNOG" id="COG1160">
    <property type="taxonomic scope" value="Bacteria"/>
</dbReference>
<dbReference type="HOGENOM" id="CLU_016077_6_2_0"/>
<dbReference type="OrthoDB" id="9805918at2"/>
<dbReference type="Proteomes" id="UP000000447">
    <property type="component" value="Chromosome"/>
</dbReference>
<dbReference type="GO" id="GO:0016887">
    <property type="term" value="F:ATP hydrolysis activity"/>
    <property type="evidence" value="ECO:0007669"/>
    <property type="project" value="InterPro"/>
</dbReference>
<dbReference type="GO" id="GO:0005525">
    <property type="term" value="F:GTP binding"/>
    <property type="evidence" value="ECO:0007669"/>
    <property type="project" value="UniProtKB-UniRule"/>
</dbReference>
<dbReference type="GO" id="GO:0043022">
    <property type="term" value="F:ribosome binding"/>
    <property type="evidence" value="ECO:0007669"/>
    <property type="project" value="TreeGrafter"/>
</dbReference>
<dbReference type="GO" id="GO:0042254">
    <property type="term" value="P:ribosome biogenesis"/>
    <property type="evidence" value="ECO:0007669"/>
    <property type="project" value="UniProtKB-KW"/>
</dbReference>
<dbReference type="CDD" id="cd01894">
    <property type="entry name" value="EngA1"/>
    <property type="match status" value="1"/>
</dbReference>
<dbReference type="CDD" id="cd01895">
    <property type="entry name" value="EngA2"/>
    <property type="match status" value="1"/>
</dbReference>
<dbReference type="FunFam" id="3.30.300.20:FF:000004">
    <property type="entry name" value="GTPase Der"/>
    <property type="match status" value="1"/>
</dbReference>
<dbReference type="FunFam" id="3.40.50.300:FF:000040">
    <property type="entry name" value="GTPase Der"/>
    <property type="match status" value="1"/>
</dbReference>
<dbReference type="FunFam" id="3.40.50.300:FF:000057">
    <property type="entry name" value="GTPase Der"/>
    <property type="match status" value="1"/>
</dbReference>
<dbReference type="Gene3D" id="3.30.300.20">
    <property type="match status" value="1"/>
</dbReference>
<dbReference type="Gene3D" id="3.40.50.300">
    <property type="entry name" value="P-loop containing nucleotide triphosphate hydrolases"/>
    <property type="match status" value="2"/>
</dbReference>
<dbReference type="HAMAP" id="MF_00195">
    <property type="entry name" value="GTPase_Der"/>
    <property type="match status" value="1"/>
</dbReference>
<dbReference type="InterPro" id="IPR003593">
    <property type="entry name" value="AAA+_ATPase"/>
</dbReference>
<dbReference type="InterPro" id="IPR031166">
    <property type="entry name" value="G_ENGA"/>
</dbReference>
<dbReference type="InterPro" id="IPR006073">
    <property type="entry name" value="GTP-bd"/>
</dbReference>
<dbReference type="InterPro" id="IPR016484">
    <property type="entry name" value="GTPase_Der"/>
</dbReference>
<dbReference type="InterPro" id="IPR032859">
    <property type="entry name" value="KH_dom-like"/>
</dbReference>
<dbReference type="InterPro" id="IPR015946">
    <property type="entry name" value="KH_dom-like_a/b"/>
</dbReference>
<dbReference type="InterPro" id="IPR027417">
    <property type="entry name" value="P-loop_NTPase"/>
</dbReference>
<dbReference type="InterPro" id="IPR005225">
    <property type="entry name" value="Small_GTP-bd"/>
</dbReference>
<dbReference type="NCBIfam" id="TIGR03594">
    <property type="entry name" value="GTPase_EngA"/>
    <property type="match status" value="1"/>
</dbReference>
<dbReference type="NCBIfam" id="TIGR00231">
    <property type="entry name" value="small_GTP"/>
    <property type="match status" value="2"/>
</dbReference>
<dbReference type="PANTHER" id="PTHR43834">
    <property type="entry name" value="GTPASE DER"/>
    <property type="match status" value="1"/>
</dbReference>
<dbReference type="PANTHER" id="PTHR43834:SF6">
    <property type="entry name" value="GTPASE DER"/>
    <property type="match status" value="1"/>
</dbReference>
<dbReference type="Pfam" id="PF14714">
    <property type="entry name" value="KH_dom-like"/>
    <property type="match status" value="1"/>
</dbReference>
<dbReference type="Pfam" id="PF01926">
    <property type="entry name" value="MMR_HSR1"/>
    <property type="match status" value="2"/>
</dbReference>
<dbReference type="PIRSF" id="PIRSF006485">
    <property type="entry name" value="GTP-binding_EngA"/>
    <property type="match status" value="1"/>
</dbReference>
<dbReference type="PRINTS" id="PR00326">
    <property type="entry name" value="GTP1OBG"/>
</dbReference>
<dbReference type="SMART" id="SM00382">
    <property type="entry name" value="AAA"/>
    <property type="match status" value="2"/>
</dbReference>
<dbReference type="SUPFAM" id="SSF52540">
    <property type="entry name" value="P-loop containing nucleoside triphosphate hydrolases"/>
    <property type="match status" value="2"/>
</dbReference>
<dbReference type="PROSITE" id="PS51712">
    <property type="entry name" value="G_ENGA"/>
    <property type="match status" value="2"/>
</dbReference>